<proteinExistence type="evidence at protein level"/>
<feature type="initiator methionine" description="Removed" evidence="3">
    <location>
        <position position="1"/>
    </location>
</feature>
<feature type="chain" id="PRO_0000075042" description="F420-dependent methylenetetrahydromethanopterin dehydrogenase">
    <location>
        <begin position="2"/>
        <end position="276"/>
    </location>
</feature>
<feature type="region of interest" description="Disordered" evidence="1">
    <location>
        <begin position="253"/>
        <end position="276"/>
    </location>
</feature>
<feature type="compositionally biased region" description="Basic and acidic residues" evidence="1">
    <location>
        <begin position="259"/>
        <end position="276"/>
    </location>
</feature>
<protein>
    <recommendedName>
        <fullName>F420-dependent methylenetetrahydromethanopterin dehydrogenase</fullName>
        <shortName evidence="4">MTD</shortName>
        <ecNumber evidence="2">1.5.98.1</ecNumber>
    </recommendedName>
    <alternativeName>
        <fullName>Coenzyme F420-dependent N5,N10-methylenetetrahydromethanopterin dehydrogenase</fullName>
    </alternativeName>
</protein>
<name>MTD_METTM</name>
<evidence type="ECO:0000256" key="1">
    <source>
        <dbReference type="SAM" id="MobiDB-lite"/>
    </source>
</evidence>
<evidence type="ECO:0000269" key="2">
    <source>
    </source>
</evidence>
<evidence type="ECO:0000269" key="3">
    <source>
    </source>
</evidence>
<evidence type="ECO:0000303" key="4">
    <source>
    </source>
</evidence>
<evidence type="ECO:0000305" key="5"/>
<evidence type="ECO:0000305" key="6">
    <source>
    </source>
</evidence>
<comment type="function">
    <text evidence="2 3">Catalyzes the reversible reduction of methenyl-H(4)MPT(+) to methylene-H(4)MPT.</text>
</comment>
<comment type="catalytic activity">
    <reaction evidence="2 3">
        <text>5,10-methylenetetrahydromethanopterin + oxidized coenzyme F420-(gamma-L-Glu)(n) + 2 H(+) = 5,10-methenyl-5,6,7,8-tetrahydromethanopterin + reduced coenzyme F420-(gamma-L-Glu)(n)</text>
        <dbReference type="Rhea" id="RHEA:16721"/>
        <dbReference type="Rhea" id="RHEA-COMP:12939"/>
        <dbReference type="Rhea" id="RHEA-COMP:14378"/>
        <dbReference type="ChEBI" id="CHEBI:15378"/>
        <dbReference type="ChEBI" id="CHEBI:57818"/>
        <dbReference type="ChEBI" id="CHEBI:58337"/>
        <dbReference type="ChEBI" id="CHEBI:133980"/>
        <dbReference type="ChEBI" id="CHEBI:139511"/>
        <dbReference type="EC" id="1.5.98.1"/>
    </reaction>
    <physiologicalReaction direction="left-to-right" evidence="2">
        <dbReference type="Rhea" id="RHEA:16722"/>
    </physiologicalReaction>
</comment>
<comment type="activity regulation">
    <text evidence="2 3">Activity requires salt; 100 mM sodium or potassium salts of chloride, phosphate or sulfate are equally effective. Not inactivated by O(2). Inhibited by hydrogen-producing 5,10-methenyltetrahydromethanopterin hydrogenase which has a higher affinity for their shared substrate (PubMed:1765081). Enzyme is O(2)-stable and strictly dependent on coenzyme F420 (PubMed:7852356).</text>
</comment>
<comment type="biophysicochemical properties">
    <kinetics>
        <KM evidence="2">70 uM for 5,10-methylenetetrahydromethanopterin</KM>
        <text evidence="2">KM for coenzyme F420-(gamma-Glu)(n) is greater than 100 uM.</text>
    </kinetics>
    <phDependence>
        <text evidence="2 3">Optimum pH is 6.0 (PubMed:1765081). Optimum pH is 4.0 (PubMed:7852356).</text>
    </phDependence>
    <temperatureDependence>
        <text evidence="2 3">Optimum temperature is 55-65 degrees Celsius (PubMed:1765081, PubMed:7852356). Thermostable up to 40 degrees Celsius (PubMed:7852356).</text>
    </temperatureDependence>
</comment>
<comment type="pathway">
    <text evidence="2 3">One-carbon metabolism; methanogenesis from CO(2); 5,10-methylene-5,6,7,8-tetrahydromethanopterin from 5,10-methenyl-5,6,7,8-tetrahydromethanopterin (coenzyme F420 route): step 1/1.</text>
</comment>
<comment type="subunit">
    <text evidence="6">Found to be tightly associated with methyl-coenzyme M methylreductase.</text>
</comment>
<comment type="induction">
    <text evidence="2">Enzyme activity is not detectable when grown anaerobically.</text>
</comment>
<comment type="similarity">
    <text evidence="5">Belongs to the MTD family.</text>
</comment>
<gene>
    <name evidence="4" type="primary">mtd</name>
    <name type="ordered locus">MTBMA_c00500</name>
</gene>
<keyword id="KW-0903">Direct protein sequencing</keyword>
<keyword id="KW-0484">Methanogenesis</keyword>
<keyword id="KW-0554">One-carbon metabolism</keyword>
<keyword id="KW-0560">Oxidoreductase</keyword>
<sequence>MVVKIGIIKCGNIGTSPVLDLLLDERADRPNIDVCVVGSGAKMNPDEIERAVPTMLEMERDFVIFISPNPGAPGPAKARELLSAADVPAMIIGDAPGLRVKDEIEEQGLGYIIVKADPMIGARREFLDPTEMASFNSDVIKVLAFTGAYRVVQNTIDAMIADVEAGKAPELPQVVIDTDKAVEAAGYTNPYAKAKAMAAYEIATKVADIDVRGCFMVQDPDQYIPIVASAHEMLSAAAKLAIEAREIEKANDTVLRTPHGKEGKTLSKKDLLAKPE</sequence>
<organism>
    <name type="scientific">Methanothermobacter marburgensis (strain ATCC BAA-927 / DSM 2133 / JCM 14651 / NBRC 100331 / OCM 82 / Marburg)</name>
    <name type="common">Methanobacterium thermoautotrophicum</name>
    <dbReference type="NCBI Taxonomy" id="79929"/>
    <lineage>
        <taxon>Archaea</taxon>
        <taxon>Methanobacteriati</taxon>
        <taxon>Methanobacteriota</taxon>
        <taxon>Methanomada group</taxon>
        <taxon>Methanobacteria</taxon>
        <taxon>Methanobacteriales</taxon>
        <taxon>Methanobacteriaceae</taxon>
        <taxon>Methanothermobacter</taxon>
    </lineage>
</organism>
<accession>P55300</accession>
<accession>D9PYW5</accession>
<reference key="1">
    <citation type="journal article" date="1995" name="J. Biol. Chem.">
        <title>Cloning, sequencing, and transcriptional analysis of the coenzyme F420-dependent methylene-5,6,7,8-tetrahydromethanopterin dehydrogenase gene from Methanobacterium thermoautotrophicum strain Marburg and functional expression in Escherichia coli.</title>
        <authorList>
            <person name="Mukhopadhyay B."/>
            <person name="Purwantini E."/>
            <person name="Pihl T.D."/>
            <person name="Reeve J.N."/>
            <person name="Daniels L."/>
        </authorList>
    </citation>
    <scope>NUCLEOTIDE SEQUENCE [GENOMIC DNA]</scope>
    <scope>PROTEIN SEQUENCE OF 2-18</scope>
    <scope>FUNCTION</scope>
    <scope>CATALYTIC ACTIVITY</scope>
    <scope>BIOPHYSICOCHEMICAL PROPERTIES</scope>
    <scope>PATHWAY</scope>
    <scope>SUBUNIT</scope>
    <source>
        <strain>ATCC BAA-927 / DSM 2133 / JCM 14651 / NBRC 100331 / OCM 82 / Marburg</strain>
    </source>
</reference>
<reference key="2">
    <citation type="journal article" date="2010" name="J. Bacteriol.">
        <title>Complete genome sequence of Methanothermobacter marburgensis, a methanoarchaeon model organism.</title>
        <authorList>
            <person name="Liesegang H."/>
            <person name="Kaster A.K."/>
            <person name="Wiezer A."/>
            <person name="Goenrich M."/>
            <person name="Wollherr A."/>
            <person name="Seedorf H."/>
            <person name="Gottschalk G."/>
            <person name="Thauer R.K."/>
        </authorList>
    </citation>
    <scope>NUCLEOTIDE SEQUENCE [LARGE SCALE GENOMIC DNA]</scope>
    <source>
        <strain>ATCC BAA-927 / DSM 2133 / JCM 14651 / NBRC 100331 / OCM 82 / Marburg</strain>
    </source>
</reference>
<reference key="3">
    <citation type="journal article" date="1991" name="Eur. J. Biochem.">
        <title>Hydrogen-forming and coenzyme-F420-reducing methylene tetrahydromethanopterin dehydrogenase are genetically distinct enzymes in Methanobacterium thermoautotrophicum (Marburg).</title>
        <authorList>
            <person name="Von Buenau R."/>
            <person name="Zirngibl C."/>
            <person name="Thauer R.K."/>
            <person name="Klein A."/>
        </authorList>
    </citation>
    <scope>FUNCTION</scope>
    <scope>CATALYTIC ACTIVITY</scope>
    <scope>ACTIVITY REGULATION</scope>
    <scope>BIOPHYSICOCHEMICAL PROPERTIES</scope>
    <scope>PATHWAY</scope>
    <source>
        <strain>ATCC BAA-927 / DSM 2133 / JCM 14651 / NBRC 100331 / OCM 82 / Marburg</strain>
    </source>
</reference>
<dbReference type="EC" id="1.5.98.1" evidence="2"/>
<dbReference type="EMBL" id="L37108">
    <property type="protein sequence ID" value="AAC41463.1"/>
    <property type="molecule type" value="Genomic_DNA"/>
</dbReference>
<dbReference type="EMBL" id="CP001710">
    <property type="protein sequence ID" value="ADL57660.1"/>
    <property type="molecule type" value="Genomic_DNA"/>
</dbReference>
<dbReference type="RefSeq" id="WP_013294889.1">
    <property type="nucleotide sequence ID" value="NC_014408.1"/>
</dbReference>
<dbReference type="SMR" id="P55300"/>
<dbReference type="STRING" id="79929.MTBMA_c00500"/>
<dbReference type="PaxDb" id="79929-MTBMA_c00500"/>
<dbReference type="GeneID" id="77398834"/>
<dbReference type="GeneID" id="9703755"/>
<dbReference type="KEGG" id="mmg:MTBMA_c00500"/>
<dbReference type="PATRIC" id="fig|79929.8.peg.48"/>
<dbReference type="HOGENOM" id="CLU_1006890_0_0_2"/>
<dbReference type="OrthoDB" id="49844at2157"/>
<dbReference type="UniPathway" id="UPA00640">
    <property type="reaction ID" value="UER00695"/>
</dbReference>
<dbReference type="Proteomes" id="UP000000345">
    <property type="component" value="Chromosome"/>
</dbReference>
<dbReference type="GO" id="GO:0008901">
    <property type="term" value="F:ferredoxin hydrogenase activity"/>
    <property type="evidence" value="ECO:0007669"/>
    <property type="project" value="InterPro"/>
</dbReference>
<dbReference type="GO" id="GO:0030268">
    <property type="term" value="F:methylenetetrahydromethanopterin dehydrogenase activity"/>
    <property type="evidence" value="ECO:0000314"/>
    <property type="project" value="MENGO"/>
</dbReference>
<dbReference type="GO" id="GO:0019386">
    <property type="term" value="P:methanogenesis, from carbon dioxide"/>
    <property type="evidence" value="ECO:0007669"/>
    <property type="project" value="UniProtKB-UniRule"/>
</dbReference>
<dbReference type="GO" id="GO:0006730">
    <property type="term" value="P:one-carbon metabolic process"/>
    <property type="evidence" value="ECO:0007669"/>
    <property type="project" value="UniProtKB-UniRule"/>
</dbReference>
<dbReference type="FunFam" id="3.40.50.10830:FF:000001">
    <property type="entry name" value="F420-dependent methylenetetrahydromethanopterin dehydrogenase"/>
    <property type="match status" value="1"/>
</dbReference>
<dbReference type="Gene3D" id="6.10.140.120">
    <property type="match status" value="1"/>
</dbReference>
<dbReference type="Gene3D" id="3.40.50.10830">
    <property type="entry name" value="F420-dependent methylenetetrahydromethanopterin dehydrogenase (MTD)"/>
    <property type="match status" value="1"/>
</dbReference>
<dbReference type="HAMAP" id="MF_00058">
    <property type="entry name" value="MTD"/>
    <property type="match status" value="1"/>
</dbReference>
<dbReference type="InterPro" id="IPR002844">
    <property type="entry name" value="MTD"/>
</dbReference>
<dbReference type="InterPro" id="IPR036080">
    <property type="entry name" value="MTD_sf"/>
</dbReference>
<dbReference type="NCBIfam" id="NF002162">
    <property type="entry name" value="PRK00994.1"/>
    <property type="match status" value="1"/>
</dbReference>
<dbReference type="Pfam" id="PF01993">
    <property type="entry name" value="MTD"/>
    <property type="match status" value="1"/>
</dbReference>
<dbReference type="PIRSF" id="PIRSF005627">
    <property type="entry name" value="MTD"/>
    <property type="match status" value="1"/>
</dbReference>
<dbReference type="SUPFAM" id="SSF102324">
    <property type="entry name" value="F420-dependent methylenetetrahydromethanopterin dehydrogenase (MTD)"/>
    <property type="match status" value="1"/>
</dbReference>